<organism>
    <name type="scientific">Trichoplax adhaerens</name>
    <name type="common">Trichoplax reptans</name>
    <dbReference type="NCBI Taxonomy" id="10228"/>
    <lineage>
        <taxon>Eukaryota</taxon>
        <taxon>Metazoa</taxon>
        <taxon>Placozoa</taxon>
        <taxon>Uniplacotomia</taxon>
        <taxon>Trichoplacea</taxon>
        <taxon>Trichoplacidae</taxon>
        <taxon>Trichoplax</taxon>
    </lineage>
</organism>
<accession>B3RNT0</accession>
<reference key="1">
    <citation type="journal article" date="2008" name="Nature">
        <title>The Trichoplax genome and the nature of placozoans.</title>
        <authorList>
            <person name="Srivastava M."/>
            <person name="Begovic E."/>
            <person name="Chapman J."/>
            <person name="Putnam N.H."/>
            <person name="Hellsten U."/>
            <person name="Kawashima T."/>
            <person name="Kuo A."/>
            <person name="Mitros T."/>
            <person name="Salamov A."/>
            <person name="Carpenter M.L."/>
            <person name="Signorovitch A.Y."/>
            <person name="Moreno M.A."/>
            <person name="Kamm K."/>
            <person name="Grimwood J."/>
            <person name="Schmutz J."/>
            <person name="Shapiro H."/>
            <person name="Grigoriev I.V."/>
            <person name="Buss L.W."/>
            <person name="Schierwater B."/>
            <person name="Dellaporta S.L."/>
            <person name="Rokhsar D.S."/>
        </authorList>
    </citation>
    <scope>NUCLEOTIDE SEQUENCE [LARGE SCALE GENOMIC DNA]</scope>
    <source>
        <strain>Grell-BS-1999</strain>
    </source>
</reference>
<protein>
    <recommendedName>
        <fullName evidence="1">Queuine tRNA-ribosyltransferase accessory subunit 2</fullName>
    </recommendedName>
    <alternativeName>
        <fullName evidence="1">Queuine tRNA-ribosyltransferase domain-containing protein 1</fullName>
    </alternativeName>
</protein>
<gene>
    <name type="ORF">TRIADDRAFT_53275</name>
</gene>
<feature type="chain" id="PRO_0000383945" description="Queuine tRNA-ribosyltransferase accessory subunit 2">
    <location>
        <begin position="1"/>
        <end position="369"/>
    </location>
</feature>
<feature type="region of interest" description="Disordered" evidence="2">
    <location>
        <begin position="263"/>
        <end position="282"/>
    </location>
</feature>
<feature type="binding site" evidence="1">
    <location>
        <position position="308"/>
    </location>
    <ligand>
        <name>Zn(2+)</name>
        <dbReference type="ChEBI" id="CHEBI:29105"/>
    </ligand>
</feature>
<feature type="binding site" evidence="1">
    <location>
        <position position="310"/>
    </location>
    <ligand>
        <name>Zn(2+)</name>
        <dbReference type="ChEBI" id="CHEBI:29105"/>
    </ligand>
</feature>
<feature type="binding site" evidence="1">
    <location>
        <position position="313"/>
    </location>
    <ligand>
        <name>Zn(2+)</name>
        <dbReference type="ChEBI" id="CHEBI:29105"/>
    </ligand>
</feature>
<feature type="binding site" evidence="1">
    <location>
        <position position="339"/>
    </location>
    <ligand>
        <name>Zn(2+)</name>
        <dbReference type="ChEBI" id="CHEBI:29105"/>
    </ligand>
</feature>
<proteinExistence type="inferred from homology"/>
<evidence type="ECO:0000255" key="1">
    <source>
        <dbReference type="HAMAP-Rule" id="MF_03043"/>
    </source>
</evidence>
<evidence type="ECO:0000256" key="2">
    <source>
        <dbReference type="SAM" id="MobiDB-lite"/>
    </source>
</evidence>
<keyword id="KW-0963">Cytoplasm</keyword>
<keyword id="KW-0479">Metal-binding</keyword>
<keyword id="KW-1185">Reference proteome</keyword>
<keyword id="KW-0819">tRNA processing</keyword>
<keyword id="KW-0862">Zinc</keyword>
<sequence length="369" mass="41705">MNFKVRVIDLAGSCCRLGALQFGTKVVETPGCLIYNRSGVVPHLTPDILETLDNVPPIMHTPLASIIEEPGLIKLRGYGKGLASFIGYKDNSVYISASDYQGEAMYQYNENKSISVWTKTGRTKVTPDDYSKFVEVCRPSWYQSLCDTVPANASIKRTRKSVDRTLEFLDQCLKYREKHDSLKTSELWAAVEGGGLVDERQRSAKESATRPVFGFTLEGFGSDQMNVETIFELLPLTTQNLPVEKPRLIHAIGSPTINSLSRSSKLTEVEEENGNDSSNDQDRTATFSLLNLREDRYNEDFSPLVSGCKCFVCSNHTRAYIHHLIINNEMLGGVLLMTHNLFQYIEFFRCIRTSLKNNKWKELRKLFDA</sequence>
<name>QTRT2_TRIAD</name>
<dbReference type="EMBL" id="DS985242">
    <property type="protein sequence ID" value="EDV28066.1"/>
    <property type="molecule type" value="Genomic_DNA"/>
</dbReference>
<dbReference type="RefSeq" id="XP_002109900.1">
    <property type="nucleotide sequence ID" value="XM_002109864.1"/>
</dbReference>
<dbReference type="SMR" id="B3RNT0"/>
<dbReference type="STRING" id="10228.B3RNT0"/>
<dbReference type="EnsemblMetazoa" id="TriadT53275">
    <property type="protein sequence ID" value="TriadP53275"/>
    <property type="gene ID" value="TriadG53275"/>
</dbReference>
<dbReference type="GeneID" id="6750565"/>
<dbReference type="KEGG" id="tad:TRIADDRAFT_53275"/>
<dbReference type="CTD" id="6750565"/>
<dbReference type="eggNOG" id="KOG3909">
    <property type="taxonomic scope" value="Eukaryota"/>
</dbReference>
<dbReference type="HOGENOM" id="CLU_037350_0_0_1"/>
<dbReference type="InParanoid" id="B3RNT0"/>
<dbReference type="OMA" id="MAGSRMK"/>
<dbReference type="OrthoDB" id="27601at2759"/>
<dbReference type="PhylomeDB" id="B3RNT0"/>
<dbReference type="Proteomes" id="UP000009022">
    <property type="component" value="Unassembled WGS sequence"/>
</dbReference>
<dbReference type="GO" id="GO:0005737">
    <property type="term" value="C:cytoplasm"/>
    <property type="evidence" value="ECO:0007669"/>
    <property type="project" value="UniProtKB-SubCell"/>
</dbReference>
<dbReference type="GO" id="GO:0046872">
    <property type="term" value="F:metal ion binding"/>
    <property type="evidence" value="ECO:0007669"/>
    <property type="project" value="UniProtKB-KW"/>
</dbReference>
<dbReference type="GO" id="GO:0008479">
    <property type="term" value="F:tRNA-guanosine(34) queuine transglycosylase activity"/>
    <property type="evidence" value="ECO:0007669"/>
    <property type="project" value="UniProtKB-UniRule"/>
</dbReference>
<dbReference type="GO" id="GO:0101030">
    <property type="term" value="P:tRNA-guanine transglycosylation"/>
    <property type="evidence" value="ECO:0000318"/>
    <property type="project" value="GO_Central"/>
</dbReference>
<dbReference type="FunFam" id="3.20.20.105:FF:000002">
    <property type="entry name" value="Queuine tRNA-ribosyltransferase accessory subunit 2"/>
    <property type="match status" value="1"/>
</dbReference>
<dbReference type="Gene3D" id="3.20.20.105">
    <property type="entry name" value="Queuine tRNA-ribosyltransferase-like"/>
    <property type="match status" value="1"/>
</dbReference>
<dbReference type="HAMAP" id="MF_03043">
    <property type="entry name" value="QTRT2"/>
    <property type="match status" value="1"/>
</dbReference>
<dbReference type="InterPro" id="IPR028592">
    <property type="entry name" value="QTRTD1"/>
</dbReference>
<dbReference type="InterPro" id="IPR050852">
    <property type="entry name" value="Queuine_tRNA-ribosyltrfase"/>
</dbReference>
<dbReference type="InterPro" id="IPR036511">
    <property type="entry name" value="TGT-like_sf"/>
</dbReference>
<dbReference type="InterPro" id="IPR002616">
    <property type="entry name" value="tRNA_ribo_trans-like"/>
</dbReference>
<dbReference type="NCBIfam" id="TIGR00449">
    <property type="entry name" value="tgt_general"/>
    <property type="match status" value="1"/>
</dbReference>
<dbReference type="PANTHER" id="PTHR46064">
    <property type="entry name" value="QUEUINE TRNA-RIBOSYLTRANSFERASE ACCESSORY SUBUNIT 2"/>
    <property type="match status" value="1"/>
</dbReference>
<dbReference type="PANTHER" id="PTHR46064:SF1">
    <property type="entry name" value="QUEUINE TRNA-RIBOSYLTRANSFERASE ACCESSORY SUBUNIT 2"/>
    <property type="match status" value="1"/>
</dbReference>
<dbReference type="Pfam" id="PF01702">
    <property type="entry name" value="TGT"/>
    <property type="match status" value="2"/>
</dbReference>
<dbReference type="SUPFAM" id="SSF51713">
    <property type="entry name" value="tRNA-guanine transglycosylase"/>
    <property type="match status" value="1"/>
</dbReference>
<comment type="function">
    <text evidence="1">Non-catalytic subunit of the queuine tRNA-ribosyltransferase (TGT) that catalyzes the base-exchange of a guanine (G) residue with queuine (Q) at position 34 (anticodon wobble position) in tRNAs with GU(N) anticodons (tRNA-Asp, -Asn, -His and -Tyr), resulting in the hypermodified nucleoside queuosine (7-(((4,5-cis-dihydroxy-2-cyclopenten-1-yl)amino)methyl)-7-deazaguanosine).</text>
</comment>
<comment type="cofactor">
    <cofactor evidence="1">
        <name>Zn(2+)</name>
        <dbReference type="ChEBI" id="CHEBI:29105"/>
    </cofactor>
    <text evidence="1">Binds 1 zinc ion per subunit.</text>
</comment>
<comment type="subunit">
    <text evidence="1">Heterodimer of a catalytic subunit and an accessory subunit.</text>
</comment>
<comment type="subcellular location">
    <subcellularLocation>
        <location evidence="1">Cytoplasm</location>
    </subcellularLocation>
</comment>
<comment type="similarity">
    <text evidence="1">Belongs to the queuine tRNA-ribosyltransferase family. QTRT2 subfamily.</text>
</comment>